<name>EFTS_CAMJE</name>
<evidence type="ECO:0000255" key="1">
    <source>
        <dbReference type="HAMAP-Rule" id="MF_00050"/>
    </source>
</evidence>
<gene>
    <name evidence="1" type="primary">tsf</name>
    <name type="ordered locus">Cj1181c</name>
</gene>
<protein>
    <recommendedName>
        <fullName evidence="1">Elongation factor Ts</fullName>
        <shortName evidence="1">EF-Ts</shortName>
    </recommendedName>
</protein>
<comment type="function">
    <text evidence="1">Associates with the EF-Tu.GDP complex and induces the exchange of GDP to GTP. It remains bound to the aminoacyl-tRNA.EF-Tu.GTP complex up to the GTP hydrolysis stage on the ribosome.</text>
</comment>
<comment type="subcellular location">
    <subcellularLocation>
        <location evidence="1">Cytoplasm</location>
    </subcellularLocation>
</comment>
<comment type="similarity">
    <text evidence="1">Belongs to the EF-Ts family.</text>
</comment>
<dbReference type="EMBL" id="AL111168">
    <property type="protein sequence ID" value="CAL35296.1"/>
    <property type="molecule type" value="Genomic_DNA"/>
</dbReference>
<dbReference type="PIR" id="G81323">
    <property type="entry name" value="G81323"/>
</dbReference>
<dbReference type="RefSeq" id="WP_002864836.1">
    <property type="nucleotide sequence ID" value="NZ_SZUC01000001.1"/>
</dbReference>
<dbReference type="RefSeq" id="YP_002344572.1">
    <property type="nucleotide sequence ID" value="NC_002163.1"/>
</dbReference>
<dbReference type="SMR" id="Q9PNB4"/>
<dbReference type="STRING" id="192222.Cj1181c"/>
<dbReference type="PaxDb" id="192222-Cj1181c"/>
<dbReference type="EnsemblBacteria" id="CAL35296">
    <property type="protein sequence ID" value="CAL35296"/>
    <property type="gene ID" value="Cj1181c"/>
</dbReference>
<dbReference type="GeneID" id="905471"/>
<dbReference type="KEGG" id="cje:Cj1181c"/>
<dbReference type="PATRIC" id="fig|192222.6.peg.1162"/>
<dbReference type="eggNOG" id="COG0264">
    <property type="taxonomic scope" value="Bacteria"/>
</dbReference>
<dbReference type="HOGENOM" id="CLU_047155_0_1_7"/>
<dbReference type="OrthoDB" id="9808348at2"/>
<dbReference type="Proteomes" id="UP000000799">
    <property type="component" value="Chromosome"/>
</dbReference>
<dbReference type="GO" id="GO:0005737">
    <property type="term" value="C:cytoplasm"/>
    <property type="evidence" value="ECO:0007669"/>
    <property type="project" value="UniProtKB-SubCell"/>
</dbReference>
<dbReference type="GO" id="GO:0003746">
    <property type="term" value="F:translation elongation factor activity"/>
    <property type="evidence" value="ECO:0007669"/>
    <property type="project" value="UniProtKB-UniRule"/>
</dbReference>
<dbReference type="CDD" id="cd14275">
    <property type="entry name" value="UBA_EF-Ts"/>
    <property type="match status" value="1"/>
</dbReference>
<dbReference type="FunFam" id="1.10.8.10:FF:000001">
    <property type="entry name" value="Elongation factor Ts"/>
    <property type="match status" value="1"/>
</dbReference>
<dbReference type="Gene3D" id="1.10.286.20">
    <property type="match status" value="2"/>
</dbReference>
<dbReference type="Gene3D" id="1.10.8.10">
    <property type="entry name" value="DNA helicase RuvA subunit, C-terminal domain"/>
    <property type="match status" value="1"/>
</dbReference>
<dbReference type="Gene3D" id="3.30.479.20">
    <property type="entry name" value="Elongation factor Ts, dimerisation domain"/>
    <property type="match status" value="3"/>
</dbReference>
<dbReference type="HAMAP" id="MF_00050">
    <property type="entry name" value="EF_Ts"/>
    <property type="match status" value="1"/>
</dbReference>
<dbReference type="InterPro" id="IPR036402">
    <property type="entry name" value="EF-Ts_dimer_sf"/>
</dbReference>
<dbReference type="InterPro" id="IPR001816">
    <property type="entry name" value="Transl_elong_EFTs/EF1B"/>
</dbReference>
<dbReference type="InterPro" id="IPR014039">
    <property type="entry name" value="Transl_elong_EFTs/EF1B_dimer"/>
</dbReference>
<dbReference type="InterPro" id="IPR018101">
    <property type="entry name" value="Transl_elong_Ts_CS"/>
</dbReference>
<dbReference type="InterPro" id="IPR009060">
    <property type="entry name" value="UBA-like_sf"/>
</dbReference>
<dbReference type="NCBIfam" id="TIGR00116">
    <property type="entry name" value="tsf"/>
    <property type="match status" value="1"/>
</dbReference>
<dbReference type="PANTHER" id="PTHR11741">
    <property type="entry name" value="ELONGATION FACTOR TS"/>
    <property type="match status" value="1"/>
</dbReference>
<dbReference type="PANTHER" id="PTHR11741:SF0">
    <property type="entry name" value="ELONGATION FACTOR TS, MITOCHONDRIAL"/>
    <property type="match status" value="1"/>
</dbReference>
<dbReference type="Pfam" id="PF00889">
    <property type="entry name" value="EF_TS"/>
    <property type="match status" value="2"/>
</dbReference>
<dbReference type="SUPFAM" id="SSF54713">
    <property type="entry name" value="Elongation factor Ts (EF-Ts), dimerisation domain"/>
    <property type="match status" value="2"/>
</dbReference>
<dbReference type="SUPFAM" id="SSF46934">
    <property type="entry name" value="UBA-like"/>
    <property type="match status" value="1"/>
</dbReference>
<dbReference type="PROSITE" id="PS01126">
    <property type="entry name" value="EF_TS_1"/>
    <property type="match status" value="1"/>
</dbReference>
<dbReference type="PROSITE" id="PS01127">
    <property type="entry name" value="EF_TS_2"/>
    <property type="match status" value="1"/>
</dbReference>
<proteinExistence type="inferred from homology"/>
<accession>Q9PNB4</accession>
<accession>Q0P975</accession>
<reference key="1">
    <citation type="journal article" date="2000" name="Nature">
        <title>The genome sequence of the food-borne pathogen Campylobacter jejuni reveals hypervariable sequences.</title>
        <authorList>
            <person name="Parkhill J."/>
            <person name="Wren B.W."/>
            <person name="Mungall K.L."/>
            <person name="Ketley J.M."/>
            <person name="Churcher C.M."/>
            <person name="Basham D."/>
            <person name="Chillingworth T."/>
            <person name="Davies R.M."/>
            <person name="Feltwell T."/>
            <person name="Holroyd S."/>
            <person name="Jagels K."/>
            <person name="Karlyshev A.V."/>
            <person name="Moule S."/>
            <person name="Pallen M.J."/>
            <person name="Penn C.W."/>
            <person name="Quail M.A."/>
            <person name="Rajandream M.A."/>
            <person name="Rutherford K.M."/>
            <person name="van Vliet A.H.M."/>
            <person name="Whitehead S."/>
            <person name="Barrell B.G."/>
        </authorList>
    </citation>
    <scope>NUCLEOTIDE SEQUENCE [LARGE SCALE GENOMIC DNA]</scope>
    <source>
        <strain>ATCC 700819 / NCTC 11168</strain>
    </source>
</reference>
<feature type="chain" id="PRO_0000161097" description="Elongation factor Ts">
    <location>
        <begin position="1"/>
        <end position="357"/>
    </location>
</feature>
<feature type="region of interest" description="Involved in Mg(2+) ion dislocation from EF-Tu" evidence="1">
    <location>
        <begin position="82"/>
        <end position="85"/>
    </location>
</feature>
<keyword id="KW-0963">Cytoplasm</keyword>
<keyword id="KW-0251">Elongation factor</keyword>
<keyword id="KW-0648">Protein biosynthesis</keyword>
<keyword id="KW-1185">Reference proteome</keyword>
<organism>
    <name type="scientific">Campylobacter jejuni subsp. jejuni serotype O:2 (strain ATCC 700819 / NCTC 11168)</name>
    <dbReference type="NCBI Taxonomy" id="192222"/>
    <lineage>
        <taxon>Bacteria</taxon>
        <taxon>Pseudomonadati</taxon>
        <taxon>Campylobacterota</taxon>
        <taxon>Epsilonproteobacteria</taxon>
        <taxon>Campylobacterales</taxon>
        <taxon>Campylobacteraceae</taxon>
        <taxon>Campylobacter</taxon>
    </lineage>
</organism>
<sequence length="357" mass="39555">MTEITAAMVKELRESTGAGMMDCKNALSETNGDFDKAVQLLREKGLGKAAKKADRLAAEGLVSVKVSDDFTSATVSEINSETDFVAKNDQFIALTKDTTAHIQSNSLQSVEELHSSTINGVKFEEYLKSQIATIGENLVVRRFATLKAGANGVVNGYIHTNGRVGVVIAAACDSAEVASKSRDLLRQICMHIAAMRPSYLSYEDLDMTFVENEYKALVAELEKENEERRRLKDPNKPEHKIPQFASRKQLSDAILKEAEEKIKEELKAQGKPEKIWDNIIPGKMNSFIADNSQLDSKLTLMGQFYVMDDKKTVEQVIAEKEKEFGGKIKIVEFICFEVGEGLEKKTEDFAAEVAAQL</sequence>